<protein>
    <recommendedName>
        <fullName evidence="3">Trans-3-hydroxy-L-proline dehydratase</fullName>
        <shortName>T3LHyp dehydratase</shortName>
        <shortName evidence="3">t3HypD</shortName>
        <ecNumber evidence="2">4.2.1.77</ecNumber>
    </recommendedName>
    <alternativeName>
        <fullName>Trans-L-3-hydroxyproline dehydratase</fullName>
    </alternativeName>
</protein>
<evidence type="ECO:0000250" key="1">
    <source>
        <dbReference type="UniProtKB" id="B9K4G4"/>
    </source>
</evidence>
<evidence type="ECO:0000269" key="2">
    <source>
    </source>
</evidence>
<evidence type="ECO:0000303" key="3">
    <source>
    </source>
</evidence>
<evidence type="ECO:0000305" key="4"/>
<evidence type="ECO:0000305" key="5">
    <source>
    </source>
</evidence>
<evidence type="ECO:0000312" key="6">
    <source>
        <dbReference type="EMBL" id="CAC48660.1"/>
    </source>
</evidence>
<name>T3HPD_RHIME</name>
<geneLocation type="plasmid">
    <name>pSymB</name>
    <name>megaplasmid 2</name>
</geneLocation>
<comment type="function">
    <text evidence="2 5">Catalyzes the dehydration of trans-3-hydroxy-L-proline (t3LHyp) to Delta(1)-pyrroline-2-carboxylate (Pyr2C). Can also catalyze the epimerization of trans-4-hydroxy-L-proline (t4LHyp) to cis-4-hydroxy-D-proline (c4DHyp), albeit with 150-fold lower efficiency. May be involved in the degradation pathway that converts t3LHyp to L-proline, which would allow R.meliloti to grow on t3LHyp as a sole carbon source. Displays no proline racemase activity.</text>
</comment>
<comment type="catalytic activity">
    <reaction evidence="2">
        <text>trans-3-hydroxy-L-proline = 1-pyrroline-2-carboxylate + H2O</text>
        <dbReference type="Rhea" id="RHEA:10320"/>
        <dbReference type="ChEBI" id="CHEBI:15377"/>
        <dbReference type="ChEBI" id="CHEBI:39785"/>
        <dbReference type="ChEBI" id="CHEBI:57938"/>
        <dbReference type="EC" id="4.2.1.77"/>
    </reaction>
</comment>
<comment type="biophysicochemical properties">
    <kinetics>
        <KM evidence="2">3.8 mM for trans-3-hydroxy-L-proline</KM>
        <KM evidence="2">6.3 mM for trans-4-hydroxy-L-proline</KM>
        <text evidence="2">kcat is 7.9 sec(-1) for t3LHyp dehydration. kcat is 0.089 sec(-1) for t4LHyp epimerization.</text>
    </kinetics>
</comment>
<comment type="induction">
    <text evidence="2">Is slightly up-regulated when the bacterium is grown on t4LHyp or t3LHyp as sole carbon source.</text>
</comment>
<comment type="similarity">
    <text evidence="4">Belongs to the proline racemase family.</text>
</comment>
<accession>Q92WR9</accession>
<gene>
    <name type="ordered locus">RB0260</name>
    <name evidence="6" type="ORF">SM_b20270</name>
</gene>
<feature type="chain" id="PRO_0000432273" description="Trans-3-hydroxy-L-proline dehydratase">
    <location>
        <begin position="1"/>
        <end position="342"/>
    </location>
</feature>
<feature type="active site" description="Proton acceptor" evidence="1">
    <location>
        <position position="90"/>
    </location>
</feature>
<feature type="binding site" evidence="1">
    <location>
        <begin position="91"/>
        <end position="92"/>
    </location>
    <ligand>
        <name>substrate</name>
    </ligand>
</feature>
<feature type="binding site" evidence="1">
    <location>
        <position position="252"/>
    </location>
    <ligand>
        <name>substrate</name>
    </ligand>
</feature>
<feature type="binding site" evidence="1">
    <location>
        <begin position="257"/>
        <end position="258"/>
    </location>
    <ligand>
        <name>substrate</name>
    </ligand>
</feature>
<organism>
    <name type="scientific">Rhizobium meliloti (strain 1021)</name>
    <name type="common">Ensifer meliloti</name>
    <name type="synonym">Sinorhizobium meliloti</name>
    <dbReference type="NCBI Taxonomy" id="266834"/>
    <lineage>
        <taxon>Bacteria</taxon>
        <taxon>Pseudomonadati</taxon>
        <taxon>Pseudomonadota</taxon>
        <taxon>Alphaproteobacteria</taxon>
        <taxon>Hyphomicrobiales</taxon>
        <taxon>Rhizobiaceae</taxon>
        <taxon>Sinorhizobium/Ensifer group</taxon>
        <taxon>Sinorhizobium</taxon>
    </lineage>
</organism>
<sequence length="342" mass="36694">MRSTKTIHVISAHAEGEVGDVIVGGVAPPPGDTIWEQSRWIAREQTLRNFVLNEPRGGVFRHVNLLVPPKHPDADAAFIIMEPEDTPPMSGSNSICVSTVLLDSGILPMKEPVTEITLEAPGGLVRVRAECRDGKAERIFVENLPSFAERLDAKLEVEGLGTLTVDTAYGGDSFVIVDAAAMGFALKPDEAHDIARLGVRITNAANAKLGFHHPENPDWRHFSFCLFAGPVERTAEGLRAGAAVAIQPGKVDRSPTGTALSARMAVLHARGQMGLSDRLTAVSLIGSTFSGRILGTTEVGGRPAVLPEISGRAWITGTHQHMLDPSDPWPEGYRLTDTWGAR</sequence>
<keyword id="KW-0456">Lyase</keyword>
<keyword id="KW-0614">Plasmid</keyword>
<keyword id="KW-1185">Reference proteome</keyword>
<dbReference type="EC" id="4.2.1.77" evidence="2"/>
<dbReference type="EMBL" id="AL591985">
    <property type="protein sequence ID" value="CAC48660.1"/>
    <property type="molecule type" value="Genomic_DNA"/>
</dbReference>
<dbReference type="PIR" id="D95874">
    <property type="entry name" value="D95874"/>
</dbReference>
<dbReference type="RefSeq" id="NP_436800.1">
    <property type="nucleotide sequence ID" value="NC_003078.1"/>
</dbReference>
<dbReference type="RefSeq" id="WP_010975160.1">
    <property type="nucleotide sequence ID" value="NC_003078.1"/>
</dbReference>
<dbReference type="SMR" id="Q92WR9"/>
<dbReference type="EnsemblBacteria" id="CAC48660">
    <property type="protein sequence ID" value="CAC48660"/>
    <property type="gene ID" value="SM_b20270"/>
</dbReference>
<dbReference type="KEGG" id="sme:SM_b20270"/>
<dbReference type="PATRIC" id="fig|266834.11.peg.5184"/>
<dbReference type="eggNOG" id="COG3938">
    <property type="taxonomic scope" value="Bacteria"/>
</dbReference>
<dbReference type="HOGENOM" id="CLU_036729_2_0_5"/>
<dbReference type="OrthoDB" id="181267at2"/>
<dbReference type="SABIO-RK" id="Q92WR9"/>
<dbReference type="Proteomes" id="UP000001976">
    <property type="component" value="Plasmid pSymB"/>
</dbReference>
<dbReference type="GO" id="GO:0047580">
    <property type="term" value="F:4-hydroxyproline epimerase activity"/>
    <property type="evidence" value="ECO:0007669"/>
    <property type="project" value="TreeGrafter"/>
</dbReference>
<dbReference type="GO" id="GO:0050346">
    <property type="term" value="F:trans-L-3-hydroxyproline dehydratase activity"/>
    <property type="evidence" value="ECO:0000314"/>
    <property type="project" value="CACAO"/>
</dbReference>
<dbReference type="FunFam" id="3.10.310.10:FF:000010">
    <property type="entry name" value="Proline racemase"/>
    <property type="match status" value="1"/>
</dbReference>
<dbReference type="Gene3D" id="3.10.310.10">
    <property type="entry name" value="Diaminopimelate Epimerase, Chain A, domain 1"/>
    <property type="match status" value="2"/>
</dbReference>
<dbReference type="InterPro" id="IPR008794">
    <property type="entry name" value="Pro_racemase_fam"/>
</dbReference>
<dbReference type="NCBIfam" id="NF047722">
    <property type="entry name" value="T3LHypDht"/>
    <property type="match status" value="1"/>
</dbReference>
<dbReference type="PANTHER" id="PTHR33442:SF5">
    <property type="entry name" value="BIFUNCTIONAL TRANS-3-HYDROXY-L-PROLINE DEHYDRATASE_2-EPIMERASE"/>
    <property type="match status" value="1"/>
</dbReference>
<dbReference type="PANTHER" id="PTHR33442">
    <property type="entry name" value="TRANS-3-HYDROXY-L-PROLINE DEHYDRATASE"/>
    <property type="match status" value="1"/>
</dbReference>
<dbReference type="Pfam" id="PF05544">
    <property type="entry name" value="Pro_racemase"/>
    <property type="match status" value="1"/>
</dbReference>
<dbReference type="PIRSF" id="PIRSF029792">
    <property type="entry name" value="Pro_racemase"/>
    <property type="match status" value="1"/>
</dbReference>
<dbReference type="SFLD" id="SFLDS00028">
    <property type="entry name" value="Proline_Racemase"/>
    <property type="match status" value="1"/>
</dbReference>
<dbReference type="SUPFAM" id="SSF54506">
    <property type="entry name" value="Diaminopimelate epimerase-like"/>
    <property type="match status" value="1"/>
</dbReference>
<proteinExistence type="evidence at protein level"/>
<reference key="1">
    <citation type="journal article" date="2001" name="Proc. Natl. Acad. Sci. U.S.A.">
        <title>The complete sequence of the 1,683-kb pSymB megaplasmid from the N2-fixing endosymbiont Sinorhizobium meliloti.</title>
        <authorList>
            <person name="Finan T.M."/>
            <person name="Weidner S."/>
            <person name="Wong K."/>
            <person name="Buhrmester J."/>
            <person name="Chain P."/>
            <person name="Vorhoelter F.J."/>
            <person name="Hernandez-Lucas I."/>
            <person name="Becker A."/>
            <person name="Cowie A."/>
            <person name="Gouzy J."/>
            <person name="Golding B."/>
            <person name="Puehler A."/>
        </authorList>
    </citation>
    <scope>NUCLEOTIDE SEQUENCE [LARGE SCALE GENOMIC DNA]</scope>
    <source>
        <strain>1021</strain>
    </source>
</reference>
<reference key="2">
    <citation type="journal article" date="2001" name="Science">
        <title>The composite genome of the legume symbiont Sinorhizobium meliloti.</title>
        <authorList>
            <person name="Galibert F."/>
            <person name="Finan T.M."/>
            <person name="Long S.R."/>
            <person name="Puehler A."/>
            <person name="Abola P."/>
            <person name="Ampe F."/>
            <person name="Barloy-Hubler F."/>
            <person name="Barnett M.J."/>
            <person name="Becker A."/>
            <person name="Boistard P."/>
            <person name="Bothe G."/>
            <person name="Boutry M."/>
            <person name="Bowser L."/>
            <person name="Buhrmester J."/>
            <person name="Cadieu E."/>
            <person name="Capela D."/>
            <person name="Chain P."/>
            <person name="Cowie A."/>
            <person name="Davis R.W."/>
            <person name="Dreano S."/>
            <person name="Federspiel N.A."/>
            <person name="Fisher R.F."/>
            <person name="Gloux S."/>
            <person name="Godrie T."/>
            <person name="Goffeau A."/>
            <person name="Golding B."/>
            <person name="Gouzy J."/>
            <person name="Gurjal M."/>
            <person name="Hernandez-Lucas I."/>
            <person name="Hong A."/>
            <person name="Huizar L."/>
            <person name="Hyman R.W."/>
            <person name="Jones T."/>
            <person name="Kahn D."/>
            <person name="Kahn M.L."/>
            <person name="Kalman S."/>
            <person name="Keating D.H."/>
            <person name="Kiss E."/>
            <person name="Komp C."/>
            <person name="Lelaure V."/>
            <person name="Masuy D."/>
            <person name="Palm C."/>
            <person name="Peck M.C."/>
            <person name="Pohl T.M."/>
            <person name="Portetelle D."/>
            <person name="Purnelle B."/>
            <person name="Ramsperger U."/>
            <person name="Surzycki R."/>
            <person name="Thebault P."/>
            <person name="Vandenbol M."/>
            <person name="Vorhoelter F.J."/>
            <person name="Weidner S."/>
            <person name="Wells D.H."/>
            <person name="Wong K."/>
            <person name="Yeh K.-C."/>
            <person name="Batut J."/>
        </authorList>
    </citation>
    <scope>NUCLEOTIDE SEQUENCE [LARGE SCALE GENOMIC DNA]</scope>
    <source>
        <strain>1021</strain>
    </source>
</reference>
<reference key="3">
    <citation type="journal article" date="2014" name="Elife">
        <title>Prediction and characterization of enzymatic activities guided by sequence similarity and genome neighborhood networks.</title>
        <authorList>
            <person name="Zhao S."/>
            <person name="Sakai A."/>
            <person name="Zhang X."/>
            <person name="Vetting M.W."/>
            <person name="Kumar R."/>
            <person name="Hillerich B."/>
            <person name="San Francisco B."/>
            <person name="Solbiati J."/>
            <person name="Steves A."/>
            <person name="Brown S."/>
            <person name="Akiva E."/>
            <person name="Barber A."/>
            <person name="Seidel R.D."/>
            <person name="Babbitt P.C."/>
            <person name="Almo S.C."/>
            <person name="Gerlt J.A."/>
            <person name="Jacobson M.P."/>
        </authorList>
    </citation>
    <scope>FUNCTION</scope>
    <scope>CATALYTIC ACTIVITY</scope>
    <scope>BIOPHYSICOCHEMICAL PROPERTIES</scope>
    <scope>INDUCTION</scope>
    <source>
        <strain>1021</strain>
    </source>
</reference>